<sequence>MKIGAQVWRALAKSCLLCATLGCLHFPGSRGGKPDFFETKAVNGSLVKSRPVRSVAEAPAPIDCELSTWSSWTACDPCQKKRYRHTYLLRPSQFYGELCDLSDKEVEDCVTNQPCRSQVRCEGFVCAQTGRCVNRRLLCNGDNDCGDQSDEANCRRIYKNCQREMEQYWAIDRLASGINLFTNTFEGPVLDHRYYAGGCSPHYILDTNFRKPYNVESYTPQTKCEYEFTLTEYESYSDFERLVIEKKTHMFNFTSGFKVDGVMDLGIKVESNEGKNYVTRTKRFAHTQSKFLHARSVLEVAHYKLKSRSLMLHYEFLQRVKSLPLEYSYGEYRDLLRDFGTHFITEAVLGGIYEYTLIMNKDAMEQGDYTLSHVTACAGGSFGIGGMVYKVYVKVGVSAKKCSDIMKEINERNKRSTMVEDLVVLVRGGTSEDITALAYKELPTPELMEAWGDAVKYNPAIIKIKAEPLYELVTATDFAYSSTVKQNLKKALEEFQSEVSSCRCAPCRGNGVPVLKGSRCECICPGGFQGTACEVTYRKDIPIDGKWSCWSDWSACSGGHKTRHRQCNNPAPHKGGSPCSGPASETLNC</sequence>
<proteinExistence type="evidence at protein level"/>
<protein>
    <recommendedName>
        <fullName>Complement component C8 beta chain</fullName>
    </recommendedName>
    <alternativeName>
        <fullName>Complement component 8 subunit beta</fullName>
    </alternativeName>
</protein>
<dbReference type="EMBL" id="AB077304">
    <property type="protein sequence ID" value="BAC41369.1"/>
    <property type="molecule type" value="mRNA"/>
</dbReference>
<dbReference type="EMBL" id="AB077305">
    <property type="protein sequence ID" value="BAC41370.1"/>
    <property type="molecule type" value="mRNA"/>
</dbReference>
<dbReference type="EMBL" id="AB077306">
    <property type="protein sequence ID" value="BAC41371.1"/>
    <property type="molecule type" value="mRNA"/>
</dbReference>
<dbReference type="EMBL" id="AK050313">
    <property type="protein sequence ID" value="BAC34183.1"/>
    <property type="molecule type" value="mRNA"/>
</dbReference>
<dbReference type="EMBL" id="BC022129">
    <property type="protein sequence ID" value="AAH22129.1"/>
    <property type="molecule type" value="mRNA"/>
</dbReference>
<dbReference type="EMBL" id="BC096382">
    <property type="protein sequence ID" value="AAH96382.1"/>
    <property type="molecule type" value="mRNA"/>
</dbReference>
<dbReference type="CCDS" id="CCDS18414.1">
    <molecule id="Q8BH35-1"/>
</dbReference>
<dbReference type="CCDS" id="CCDS84762.1">
    <molecule id="Q8BH35-2"/>
</dbReference>
<dbReference type="RefSeq" id="NP_001303600.1">
    <molecule id="Q8BH35-2"/>
    <property type="nucleotide sequence ID" value="NM_001316671.1"/>
</dbReference>
<dbReference type="RefSeq" id="NP_598643.1">
    <molecule id="Q8BH35-1"/>
    <property type="nucleotide sequence ID" value="NM_133882.2"/>
</dbReference>
<dbReference type="SMR" id="Q8BH35"/>
<dbReference type="BioGRID" id="225551">
    <property type="interactions" value="3"/>
</dbReference>
<dbReference type="ComplexPortal" id="CPX-6202">
    <property type="entry name" value="Membrane attack complex"/>
</dbReference>
<dbReference type="FunCoup" id="Q8BH35">
    <property type="interactions" value="76"/>
</dbReference>
<dbReference type="STRING" id="10090.ENSMUSP00000031663"/>
<dbReference type="GlyCosmos" id="Q8BH35">
    <property type="glycosylation" value="6 sites, No reported glycans"/>
</dbReference>
<dbReference type="GlyGen" id="Q8BH35">
    <property type="glycosylation" value="6 sites, 1 N-linked glycan (1 site)"/>
</dbReference>
<dbReference type="iPTMnet" id="Q8BH35"/>
<dbReference type="PhosphoSitePlus" id="Q8BH35"/>
<dbReference type="SwissPalm" id="Q8BH35"/>
<dbReference type="CPTAC" id="non-CPTAC-3535"/>
<dbReference type="CPTAC" id="non-CPTAC-5590"/>
<dbReference type="jPOST" id="Q8BH35"/>
<dbReference type="PaxDb" id="10090-ENSMUSP00000031663"/>
<dbReference type="PeptideAtlas" id="Q8BH35"/>
<dbReference type="ProteomicsDB" id="283548">
    <molecule id="Q8BH35-1"/>
</dbReference>
<dbReference type="ProteomicsDB" id="283549">
    <molecule id="Q8BH35-2"/>
</dbReference>
<dbReference type="Antibodypedia" id="19370">
    <property type="antibodies" value="204 antibodies from 27 providers"/>
</dbReference>
<dbReference type="DNASU" id="110382"/>
<dbReference type="Ensembl" id="ENSMUST00000031663.10">
    <molecule id="Q8BH35-1"/>
    <property type="protein sequence ID" value="ENSMUSP00000031663.4"/>
    <property type="gene ID" value="ENSMUSG00000029656.14"/>
</dbReference>
<dbReference type="Ensembl" id="ENSMUST00000065072.7">
    <molecule id="Q8BH35-2"/>
    <property type="protein sequence ID" value="ENSMUSP00000066940.7"/>
    <property type="gene ID" value="ENSMUSG00000029656.14"/>
</dbReference>
<dbReference type="GeneID" id="110382"/>
<dbReference type="KEGG" id="mmu:110382"/>
<dbReference type="UCSC" id="uc008txy.1">
    <molecule id="Q8BH35-1"/>
    <property type="organism name" value="mouse"/>
</dbReference>
<dbReference type="UCSC" id="uc012dhv.1">
    <molecule id="Q8BH35-2"/>
    <property type="organism name" value="mouse"/>
</dbReference>
<dbReference type="AGR" id="MGI:88236"/>
<dbReference type="CTD" id="732"/>
<dbReference type="MGI" id="MGI:88236">
    <property type="gene designation" value="C8b"/>
</dbReference>
<dbReference type="VEuPathDB" id="HostDB:ENSMUSG00000029656"/>
<dbReference type="eggNOG" id="KOG3535">
    <property type="taxonomic scope" value="Eukaryota"/>
</dbReference>
<dbReference type="GeneTree" id="ENSGT00940000160247"/>
<dbReference type="HOGENOM" id="CLU_032453_1_0_1"/>
<dbReference type="InParanoid" id="Q8BH35"/>
<dbReference type="OMA" id="KYYAGAC"/>
<dbReference type="OrthoDB" id="6150863at2759"/>
<dbReference type="PhylomeDB" id="Q8BH35"/>
<dbReference type="TreeFam" id="TF330498"/>
<dbReference type="Reactome" id="R-MMU-166665">
    <property type="pathway name" value="Terminal pathway of complement"/>
</dbReference>
<dbReference type="Reactome" id="R-MMU-977606">
    <property type="pathway name" value="Regulation of Complement cascade"/>
</dbReference>
<dbReference type="BioGRID-ORCS" id="110382">
    <property type="hits" value="2 hits in 76 CRISPR screens"/>
</dbReference>
<dbReference type="PRO" id="PR:Q8BH35"/>
<dbReference type="Proteomes" id="UP000000589">
    <property type="component" value="Chromosome 4"/>
</dbReference>
<dbReference type="RNAct" id="Q8BH35">
    <property type="molecule type" value="protein"/>
</dbReference>
<dbReference type="Bgee" id="ENSMUSG00000029656">
    <property type="expression patterns" value="Expressed in left lobe of liver and 26 other cell types or tissues"/>
</dbReference>
<dbReference type="GO" id="GO:0005615">
    <property type="term" value="C:extracellular space"/>
    <property type="evidence" value="ECO:0007669"/>
    <property type="project" value="Ensembl"/>
</dbReference>
<dbReference type="GO" id="GO:0005579">
    <property type="term" value="C:membrane attack complex"/>
    <property type="evidence" value="ECO:0000266"/>
    <property type="project" value="ComplexPortal"/>
</dbReference>
<dbReference type="GO" id="GO:0005886">
    <property type="term" value="C:plasma membrane"/>
    <property type="evidence" value="ECO:0000303"/>
    <property type="project" value="ComplexPortal"/>
</dbReference>
<dbReference type="GO" id="GO:0044877">
    <property type="term" value="F:protein-containing complex binding"/>
    <property type="evidence" value="ECO:0007669"/>
    <property type="project" value="Ensembl"/>
</dbReference>
<dbReference type="GO" id="GO:0006957">
    <property type="term" value="P:complement activation, alternative pathway"/>
    <property type="evidence" value="ECO:0007669"/>
    <property type="project" value="UniProtKB-KW"/>
</dbReference>
<dbReference type="GO" id="GO:0006958">
    <property type="term" value="P:complement activation, classical pathway"/>
    <property type="evidence" value="ECO:0007669"/>
    <property type="project" value="UniProtKB-KW"/>
</dbReference>
<dbReference type="GO" id="GO:0031640">
    <property type="term" value="P:killing of cells of another organism"/>
    <property type="evidence" value="ECO:0007669"/>
    <property type="project" value="UniProtKB-KW"/>
</dbReference>
<dbReference type="GO" id="GO:0050778">
    <property type="term" value="P:positive regulation of immune response"/>
    <property type="evidence" value="ECO:0000303"/>
    <property type="project" value="ComplexPortal"/>
</dbReference>
<dbReference type="CDD" id="cd00112">
    <property type="entry name" value="LDLa"/>
    <property type="match status" value="1"/>
</dbReference>
<dbReference type="FunFam" id="2.20.100.10:FF:000082">
    <property type="entry name" value="Complement component C8 beta chain"/>
    <property type="match status" value="1"/>
</dbReference>
<dbReference type="FunFam" id="4.10.400.10:FF:000069">
    <property type="entry name" value="complement component C8 beta chain"/>
    <property type="match status" value="1"/>
</dbReference>
<dbReference type="FunFam" id="2.20.100.10:FF:000001">
    <property type="entry name" value="semaphorin-5A isoform X1"/>
    <property type="match status" value="1"/>
</dbReference>
<dbReference type="Gene3D" id="4.10.400.10">
    <property type="entry name" value="Low-density Lipoprotein Receptor"/>
    <property type="match status" value="1"/>
</dbReference>
<dbReference type="Gene3D" id="2.20.100.10">
    <property type="entry name" value="Thrombospondin type-1 (TSP1) repeat"/>
    <property type="match status" value="2"/>
</dbReference>
<dbReference type="InterPro" id="IPR048831">
    <property type="entry name" value="C8A_B_C6_EGF-like"/>
</dbReference>
<dbReference type="InterPro" id="IPR036055">
    <property type="entry name" value="LDL_receptor-like_sf"/>
</dbReference>
<dbReference type="InterPro" id="IPR023415">
    <property type="entry name" value="LDLR_class-A_CS"/>
</dbReference>
<dbReference type="InterPro" id="IPR002172">
    <property type="entry name" value="LDrepeatLR_classA_rpt"/>
</dbReference>
<dbReference type="InterPro" id="IPR001862">
    <property type="entry name" value="MAC_perforin"/>
</dbReference>
<dbReference type="InterPro" id="IPR020864">
    <property type="entry name" value="MACPF"/>
</dbReference>
<dbReference type="InterPro" id="IPR020863">
    <property type="entry name" value="MACPF_CS"/>
</dbReference>
<dbReference type="InterPro" id="IPR000884">
    <property type="entry name" value="TSP1_rpt"/>
</dbReference>
<dbReference type="InterPro" id="IPR036383">
    <property type="entry name" value="TSP1_rpt_sf"/>
</dbReference>
<dbReference type="PANTHER" id="PTHR45742">
    <property type="entry name" value="COMPLEMENT COMPONENT C6"/>
    <property type="match status" value="1"/>
</dbReference>
<dbReference type="PANTHER" id="PTHR45742:SF5">
    <property type="entry name" value="COMPLEMENT COMPONENT C8 BETA CHAIN"/>
    <property type="match status" value="1"/>
</dbReference>
<dbReference type="Pfam" id="PF21195">
    <property type="entry name" value="EGF_C8A_B_C6"/>
    <property type="match status" value="1"/>
</dbReference>
<dbReference type="Pfam" id="PF00057">
    <property type="entry name" value="Ldl_recept_a"/>
    <property type="match status" value="1"/>
</dbReference>
<dbReference type="Pfam" id="PF01823">
    <property type="entry name" value="MACPF"/>
    <property type="match status" value="1"/>
</dbReference>
<dbReference type="Pfam" id="PF00090">
    <property type="entry name" value="TSP_1"/>
    <property type="match status" value="2"/>
</dbReference>
<dbReference type="PRINTS" id="PR00764">
    <property type="entry name" value="COMPLEMENTC9"/>
</dbReference>
<dbReference type="PRINTS" id="PR01705">
    <property type="entry name" value="TSP1REPEAT"/>
</dbReference>
<dbReference type="SMART" id="SM00192">
    <property type="entry name" value="LDLa"/>
    <property type="match status" value="1"/>
</dbReference>
<dbReference type="SMART" id="SM00457">
    <property type="entry name" value="MACPF"/>
    <property type="match status" value="1"/>
</dbReference>
<dbReference type="SMART" id="SM00209">
    <property type="entry name" value="TSP1"/>
    <property type="match status" value="2"/>
</dbReference>
<dbReference type="SUPFAM" id="SSF57424">
    <property type="entry name" value="LDL receptor-like module"/>
    <property type="match status" value="1"/>
</dbReference>
<dbReference type="SUPFAM" id="SSF82895">
    <property type="entry name" value="TSP-1 type 1 repeat"/>
    <property type="match status" value="2"/>
</dbReference>
<dbReference type="PROSITE" id="PS00022">
    <property type="entry name" value="EGF_1"/>
    <property type="match status" value="1"/>
</dbReference>
<dbReference type="PROSITE" id="PS01186">
    <property type="entry name" value="EGF_2"/>
    <property type="match status" value="1"/>
</dbReference>
<dbReference type="PROSITE" id="PS01209">
    <property type="entry name" value="LDLRA_1"/>
    <property type="match status" value="1"/>
</dbReference>
<dbReference type="PROSITE" id="PS50068">
    <property type="entry name" value="LDLRA_2"/>
    <property type="match status" value="1"/>
</dbReference>
<dbReference type="PROSITE" id="PS00279">
    <property type="entry name" value="MACPF_1"/>
    <property type="match status" value="1"/>
</dbReference>
<dbReference type="PROSITE" id="PS51412">
    <property type="entry name" value="MACPF_2"/>
    <property type="match status" value="1"/>
</dbReference>
<dbReference type="PROSITE" id="PS50092">
    <property type="entry name" value="TSP1"/>
    <property type="match status" value="2"/>
</dbReference>
<name>CO8B_MOUSE</name>
<gene>
    <name type="primary">C8b</name>
</gene>
<keyword id="KW-0025">Alternative splicing</keyword>
<keyword id="KW-0106">Calcium</keyword>
<keyword id="KW-0179">Complement alternate pathway</keyword>
<keyword id="KW-0180">Complement pathway</keyword>
<keyword id="KW-0204">Cytolysis</keyword>
<keyword id="KW-1015">Disulfide bond</keyword>
<keyword id="KW-0245">EGF-like domain</keyword>
<keyword id="KW-0325">Glycoprotein</keyword>
<keyword id="KW-0391">Immunity</keyword>
<keyword id="KW-0399">Innate immunity</keyword>
<keyword id="KW-0472">Membrane</keyword>
<keyword id="KW-0473">Membrane attack complex</keyword>
<keyword id="KW-0479">Metal-binding</keyword>
<keyword id="KW-0597">Phosphoprotein</keyword>
<keyword id="KW-1185">Reference proteome</keyword>
<keyword id="KW-0677">Repeat</keyword>
<keyword id="KW-0964">Secreted</keyword>
<keyword id="KW-0732">Signal</keyword>
<keyword id="KW-1052">Target cell membrane</keyword>
<keyword id="KW-1053">Target membrane</keyword>
<keyword id="KW-0812">Transmembrane</keyword>
<keyword id="KW-1134">Transmembrane beta strand</keyword>
<comment type="function">
    <text evidence="1">Component of the membrane attack complex (MAC), a multiprotein complex activated by the complement cascade, which inserts into a target cell membrane and forms a pore, leading to target cell membrane rupture and cell lysis. The MAC is initiated by proteolytic cleavage of C5 into complement C5b in response to the classical, alternative, lectin and GZMK complement pathways. The complement pathways consist in a cascade of proteins that leads to phagocytosis and breakdown of pathogens and signaling that strengthens the adaptive immune system. C8B, together with C8A and C8G, inserts into the target membrane, but does not form pores by itself. During MAC assembly, associates with C5b, C6 and C7 to form the C5b8 intermediate complex that inserts into the target membrane and traverses the bilayer increasing membrane rigidity.</text>
</comment>
<comment type="activity regulation">
    <text evidence="1">Membrane attack complex (MAC) assembly is inhibited by CD59, thereby protecting self-cells from damage during complement activation. CD59 acts by binding to the beta-haipins of C8 (C8A and C8B), forming an intermolecular beta-sheet that prevents incorporation of the multiple copies of C9 required for complete formation of the osmolytic pore. MAC assembly is also inhibited by clusterin (CLU) chaperones that inhibit polymerization of C9.</text>
</comment>
<comment type="subunit">
    <text evidence="1">Heterotrimer of 3 chains: alpha (C8A), beta (C8B) and gamma (C8G); the alpha and gamma chains are disulfide bonded. Component of the membrane attack complex (MAC), composed of complement C5b, C6, C7, C8A, C8B, C8G and multiple copies of the pore-forming subunit C9.</text>
</comment>
<comment type="subcellular location">
    <subcellularLocation>
        <location evidence="1">Secreted</location>
    </subcellularLocation>
    <subcellularLocation>
        <location evidence="1">Target cell membrane</location>
        <topology evidence="1">Multi-pass membrane protein</topology>
    </subcellularLocation>
    <text evidence="1">Secreted as soluble protein. Inserts into the cell membrane of target cells.</text>
</comment>
<comment type="alternative products">
    <event type="alternative splicing"/>
    <isoform>
        <id>Q8BH35-1</id>
        <name>1</name>
        <sequence type="displayed"/>
    </isoform>
    <isoform>
        <id>Q8BH35-2</id>
        <name>2</name>
        <sequence type="described" ref="VSP_016666"/>
    </isoform>
</comment>
<comment type="PTM">
    <text evidence="1">N-glycosylated; contains one or two bound glycans. Not O-glycosylated.</text>
</comment>
<comment type="similarity">
    <text evidence="9">Belongs to the complement C6/C7/C8/C9 family.</text>
</comment>
<feature type="signal peptide" evidence="2">
    <location>
        <begin position="1"/>
        <end position="31"/>
    </location>
</feature>
<feature type="propeptide" id="PRO_0000023593" evidence="1">
    <location>
        <begin position="32"/>
        <end position="53"/>
    </location>
</feature>
<feature type="chain" id="PRO_0000023594" description="Complement component C8 beta chain">
    <location>
        <begin position="54"/>
        <end position="589"/>
    </location>
</feature>
<feature type="transmembrane region" description="Beta stranded" evidence="1">
    <location>
        <begin position="201"/>
        <end position="206"/>
    </location>
</feature>
<feature type="transmembrane region" description="Beta stranded" evidence="1">
    <location>
        <begin position="209"/>
        <end position="213"/>
    </location>
</feature>
<feature type="transmembrane region" description="Beta stranded" evidence="1">
    <location>
        <begin position="251"/>
        <end position="258"/>
    </location>
</feature>
<feature type="transmembrane region" description="Beta stranded" evidence="1">
    <location>
        <begin position="261"/>
        <end position="268"/>
    </location>
</feature>
<feature type="transmembrane region" description="Beta stranded" evidence="1">
    <location>
        <begin position="328"/>
        <end position="335"/>
    </location>
</feature>
<feature type="transmembrane region" description="Beta stranded" evidence="1">
    <location>
        <begin position="338"/>
        <end position="343"/>
    </location>
</feature>
<feature type="transmembrane region" description="Beta stranded" evidence="1">
    <location>
        <begin position="378"/>
        <end position="385"/>
    </location>
</feature>
<feature type="transmembrane region" description="Beta stranded" evidence="1">
    <location>
        <begin position="391"/>
        <end position="398"/>
    </location>
</feature>
<feature type="domain" description="TSP type-1 1" evidence="4">
    <location>
        <begin position="63"/>
        <end position="116"/>
    </location>
</feature>
<feature type="domain" description="LDL-receptor class A" evidence="3">
    <location>
        <begin position="120"/>
        <end position="155"/>
    </location>
</feature>
<feature type="domain" description="MACPF" evidence="5">
    <location>
        <begin position="157"/>
        <end position="503"/>
    </location>
</feature>
<feature type="domain" description="EGF-like">
    <location>
        <begin position="404"/>
        <end position="534"/>
    </location>
</feature>
<feature type="domain" description="TSP type-1 2" evidence="4">
    <location>
        <begin position="544"/>
        <end position="587"/>
    </location>
</feature>
<feature type="region of interest" description="Disordered" evidence="6">
    <location>
        <begin position="570"/>
        <end position="589"/>
    </location>
</feature>
<feature type="binding site" evidence="1">
    <location>
        <position position="137"/>
    </location>
    <ligand>
        <name>Ca(2+)</name>
        <dbReference type="ChEBI" id="CHEBI:29108"/>
    </ligand>
</feature>
<feature type="binding site" evidence="1">
    <location>
        <position position="140"/>
    </location>
    <ligand>
        <name>Ca(2+)</name>
        <dbReference type="ChEBI" id="CHEBI:29108"/>
    </ligand>
</feature>
<feature type="binding site" evidence="1">
    <location>
        <position position="142"/>
    </location>
    <ligand>
        <name>Ca(2+)</name>
        <dbReference type="ChEBI" id="CHEBI:29108"/>
    </ligand>
</feature>
<feature type="binding site" evidence="1">
    <location>
        <position position="144"/>
    </location>
    <ligand>
        <name>Ca(2+)</name>
        <dbReference type="ChEBI" id="CHEBI:29108"/>
    </ligand>
</feature>
<feature type="binding site" evidence="1">
    <location>
        <position position="150"/>
    </location>
    <ligand>
        <name>Ca(2+)</name>
        <dbReference type="ChEBI" id="CHEBI:29108"/>
    </ligand>
</feature>
<feature type="binding site" evidence="1">
    <location>
        <position position="151"/>
    </location>
    <ligand>
        <name>Ca(2+)</name>
        <dbReference type="ChEBI" id="CHEBI:29108"/>
    </ligand>
</feature>
<feature type="modified residue" description="Phosphothreonine" evidence="1">
    <location>
        <position position="417"/>
    </location>
</feature>
<feature type="glycosylation site" description="N-linked (GlcNAc...) asparagine" evidence="7">
    <location>
        <position position="43"/>
    </location>
</feature>
<feature type="glycosylation site" description="C-linked (Man) tryptophan" evidence="1">
    <location>
        <position position="69"/>
    </location>
</feature>
<feature type="glycosylation site" description="C-linked (Man) tryptophan" evidence="1">
    <location>
        <position position="72"/>
    </location>
</feature>
<feature type="glycosylation site" description="C-linked (Man) tryptophan" evidence="1">
    <location>
        <position position="550"/>
    </location>
</feature>
<feature type="glycosylation site" description="C-linked (Man) tryptophan" evidence="1">
    <location>
        <position position="553"/>
    </location>
</feature>
<feature type="disulfide bond" evidence="1">
    <location>
        <begin position="64"/>
        <end position="99"/>
    </location>
</feature>
<feature type="disulfide bond" evidence="1">
    <location>
        <begin position="75"/>
        <end position="109"/>
    </location>
</feature>
<feature type="disulfide bond" evidence="1">
    <location>
        <begin position="78"/>
        <end position="115"/>
    </location>
</feature>
<feature type="disulfide bond" evidence="1">
    <location>
        <begin position="121"/>
        <end position="132"/>
    </location>
</feature>
<feature type="disulfide bond" evidence="1">
    <location>
        <begin position="126"/>
        <end position="145"/>
    </location>
</feature>
<feature type="disulfide bond" evidence="1">
    <location>
        <begin position="139"/>
        <end position="154"/>
    </location>
</feature>
<feature type="disulfide bond" evidence="1">
    <location>
        <begin position="161"/>
        <end position="199"/>
    </location>
</feature>
<feature type="disulfide bond" evidence="1">
    <location>
        <begin position="377"/>
        <end position="402"/>
    </location>
</feature>
<feature type="disulfide bond" evidence="1">
    <location>
        <begin position="502"/>
        <end position="549"/>
    </location>
</feature>
<feature type="disulfide bond" evidence="1">
    <location>
        <begin position="504"/>
        <end position="520"/>
    </location>
</feature>
<feature type="disulfide bond" evidence="1">
    <location>
        <begin position="507"/>
        <end position="522"/>
    </location>
</feature>
<feature type="disulfide bond" evidence="1">
    <location>
        <begin position="524"/>
        <end position="533"/>
    </location>
</feature>
<feature type="disulfide bond" evidence="1">
    <location>
        <begin position="556"/>
        <end position="589"/>
    </location>
</feature>
<feature type="splice variant" id="VSP_016666" description="In isoform 2." evidence="8">
    <location>
        <begin position="222"/>
        <end position="287"/>
    </location>
</feature>
<feature type="sequence variant" description="In strain: Mae/Stm.">
    <original>S</original>
    <variation>W</variation>
    <location>
        <position position="14"/>
    </location>
</feature>
<feature type="sequence variant" description="In strain: MSM/Ms.">
    <original>A</original>
    <variation>T</variation>
    <location>
        <position position="19"/>
    </location>
</feature>
<feature type="sequence variant" description="In strain: Mae/Stm.">
    <original>A</original>
    <variation>E</variation>
    <location>
        <position position="60"/>
    </location>
</feature>
<feature type="sequence variant" description="In strain: MSM/Ms.">
    <original>Q</original>
    <variation>R</variation>
    <location>
        <position position="118"/>
    </location>
</feature>
<feature type="sequence variant" description="In strain: Mae/Stm.">
    <original>N</original>
    <variation>K</variation>
    <location>
        <position position="160"/>
    </location>
</feature>
<feature type="sequence variant" description="In strain: Mae/Stm and MSM/Ms.">
    <original>E</original>
    <variation>K</variation>
    <location>
        <position position="449"/>
    </location>
</feature>
<feature type="sequence variant" description="In strain: Mae/Stm and MSM/Ms.">
    <original>S</original>
    <variation>R</variation>
    <location>
        <position position="497"/>
    </location>
</feature>
<feature type="sequence variant" description="In strain: Mae/Stm and MSM/Ms.">
    <original>R</original>
    <variation>H</variation>
    <location>
        <position position="503"/>
    </location>
</feature>
<feature type="sequence variant" description="In strain: Mae/Stm.">
    <original>H</original>
    <variation>Q</variation>
    <location>
        <position position="564"/>
    </location>
</feature>
<feature type="sequence variant" description="In strain: MSM/Ms.">
    <original>N</original>
    <variation>S</variation>
    <location>
        <position position="569"/>
    </location>
</feature>
<feature type="sequence variant" description="In strain: Mae/Stm and MSM/Ms.">
    <original>S</original>
    <variation>N</variation>
    <location>
        <position position="577"/>
    </location>
</feature>
<organism>
    <name type="scientific">Mus musculus</name>
    <name type="common">Mouse</name>
    <dbReference type="NCBI Taxonomy" id="10090"/>
    <lineage>
        <taxon>Eukaryota</taxon>
        <taxon>Metazoa</taxon>
        <taxon>Chordata</taxon>
        <taxon>Craniata</taxon>
        <taxon>Vertebrata</taxon>
        <taxon>Euteleostomi</taxon>
        <taxon>Mammalia</taxon>
        <taxon>Eutheria</taxon>
        <taxon>Euarchontoglires</taxon>
        <taxon>Glires</taxon>
        <taxon>Rodentia</taxon>
        <taxon>Myomorpha</taxon>
        <taxon>Muroidea</taxon>
        <taxon>Muridae</taxon>
        <taxon>Murinae</taxon>
        <taxon>Mus</taxon>
        <taxon>Mus</taxon>
    </lineage>
</organism>
<evidence type="ECO:0000250" key="1">
    <source>
        <dbReference type="UniProtKB" id="P07358"/>
    </source>
</evidence>
<evidence type="ECO:0000255" key="2"/>
<evidence type="ECO:0000255" key="3">
    <source>
        <dbReference type="PROSITE-ProRule" id="PRU00124"/>
    </source>
</evidence>
<evidence type="ECO:0000255" key="4">
    <source>
        <dbReference type="PROSITE-ProRule" id="PRU00210"/>
    </source>
</evidence>
<evidence type="ECO:0000255" key="5">
    <source>
        <dbReference type="PROSITE-ProRule" id="PRU00745"/>
    </source>
</evidence>
<evidence type="ECO:0000256" key="6">
    <source>
        <dbReference type="SAM" id="MobiDB-lite"/>
    </source>
</evidence>
<evidence type="ECO:0000269" key="7">
    <source>
    </source>
</evidence>
<evidence type="ECO:0000303" key="8">
    <source ref="1"/>
</evidence>
<evidence type="ECO:0000305" key="9"/>
<accession>Q8BH35</accession>
<accession>Q4VAH1</accession>
<accession>Q8CHJ5</accession>
<accession>Q8CHJ6</accession>
<accession>Q8VC14</accession>
<reference key="1">
    <citation type="submission" date="2002-01" db="EMBL/GenBank/DDBJ databases">
        <title>Two mouse strains with complementary mutations on the 8th complement.</title>
        <authorList>
            <person name="Tanaka S."/>
            <person name="Kikkawa Y."/>
            <person name="Hosonuma M.I."/>
            <person name="Koike S."/>
            <person name="Yonekawa H."/>
        </authorList>
    </citation>
    <scope>NUCLEOTIDE SEQUENCE [MRNA] (ISOFORMS 1 AND 2)</scope>
    <source>
        <strain>DBA/2J</strain>
        <strain>Mae/Stm</strain>
        <strain>MSM/Ms</strain>
        <tissue>Liver</tissue>
    </source>
</reference>
<reference key="2">
    <citation type="journal article" date="2005" name="Science">
        <title>The transcriptional landscape of the mammalian genome.</title>
        <authorList>
            <person name="Carninci P."/>
            <person name="Kasukawa T."/>
            <person name="Katayama S."/>
            <person name="Gough J."/>
            <person name="Frith M.C."/>
            <person name="Maeda N."/>
            <person name="Oyama R."/>
            <person name="Ravasi T."/>
            <person name="Lenhard B."/>
            <person name="Wells C."/>
            <person name="Kodzius R."/>
            <person name="Shimokawa K."/>
            <person name="Bajic V.B."/>
            <person name="Brenner S.E."/>
            <person name="Batalov S."/>
            <person name="Forrest A.R."/>
            <person name="Zavolan M."/>
            <person name="Davis M.J."/>
            <person name="Wilming L.G."/>
            <person name="Aidinis V."/>
            <person name="Allen J.E."/>
            <person name="Ambesi-Impiombato A."/>
            <person name="Apweiler R."/>
            <person name="Aturaliya R.N."/>
            <person name="Bailey T.L."/>
            <person name="Bansal M."/>
            <person name="Baxter L."/>
            <person name="Beisel K.W."/>
            <person name="Bersano T."/>
            <person name="Bono H."/>
            <person name="Chalk A.M."/>
            <person name="Chiu K.P."/>
            <person name="Choudhary V."/>
            <person name="Christoffels A."/>
            <person name="Clutterbuck D.R."/>
            <person name="Crowe M.L."/>
            <person name="Dalla E."/>
            <person name="Dalrymple B.P."/>
            <person name="de Bono B."/>
            <person name="Della Gatta G."/>
            <person name="di Bernardo D."/>
            <person name="Down T."/>
            <person name="Engstrom P."/>
            <person name="Fagiolini M."/>
            <person name="Faulkner G."/>
            <person name="Fletcher C.F."/>
            <person name="Fukushima T."/>
            <person name="Furuno M."/>
            <person name="Futaki S."/>
            <person name="Gariboldi M."/>
            <person name="Georgii-Hemming P."/>
            <person name="Gingeras T.R."/>
            <person name="Gojobori T."/>
            <person name="Green R.E."/>
            <person name="Gustincich S."/>
            <person name="Harbers M."/>
            <person name="Hayashi Y."/>
            <person name="Hensch T.K."/>
            <person name="Hirokawa N."/>
            <person name="Hill D."/>
            <person name="Huminiecki L."/>
            <person name="Iacono M."/>
            <person name="Ikeo K."/>
            <person name="Iwama A."/>
            <person name="Ishikawa T."/>
            <person name="Jakt M."/>
            <person name="Kanapin A."/>
            <person name="Katoh M."/>
            <person name="Kawasawa Y."/>
            <person name="Kelso J."/>
            <person name="Kitamura H."/>
            <person name="Kitano H."/>
            <person name="Kollias G."/>
            <person name="Krishnan S.P."/>
            <person name="Kruger A."/>
            <person name="Kummerfeld S.K."/>
            <person name="Kurochkin I.V."/>
            <person name="Lareau L.F."/>
            <person name="Lazarevic D."/>
            <person name="Lipovich L."/>
            <person name="Liu J."/>
            <person name="Liuni S."/>
            <person name="McWilliam S."/>
            <person name="Madan Babu M."/>
            <person name="Madera M."/>
            <person name="Marchionni L."/>
            <person name="Matsuda H."/>
            <person name="Matsuzawa S."/>
            <person name="Miki H."/>
            <person name="Mignone F."/>
            <person name="Miyake S."/>
            <person name="Morris K."/>
            <person name="Mottagui-Tabar S."/>
            <person name="Mulder N."/>
            <person name="Nakano N."/>
            <person name="Nakauchi H."/>
            <person name="Ng P."/>
            <person name="Nilsson R."/>
            <person name="Nishiguchi S."/>
            <person name="Nishikawa S."/>
            <person name="Nori F."/>
            <person name="Ohara O."/>
            <person name="Okazaki Y."/>
            <person name="Orlando V."/>
            <person name="Pang K.C."/>
            <person name="Pavan W.J."/>
            <person name="Pavesi G."/>
            <person name="Pesole G."/>
            <person name="Petrovsky N."/>
            <person name="Piazza S."/>
            <person name="Reed J."/>
            <person name="Reid J.F."/>
            <person name="Ring B.Z."/>
            <person name="Ringwald M."/>
            <person name="Rost B."/>
            <person name="Ruan Y."/>
            <person name="Salzberg S.L."/>
            <person name="Sandelin A."/>
            <person name="Schneider C."/>
            <person name="Schoenbach C."/>
            <person name="Sekiguchi K."/>
            <person name="Semple C.A."/>
            <person name="Seno S."/>
            <person name="Sessa L."/>
            <person name="Sheng Y."/>
            <person name="Shibata Y."/>
            <person name="Shimada H."/>
            <person name="Shimada K."/>
            <person name="Silva D."/>
            <person name="Sinclair B."/>
            <person name="Sperling S."/>
            <person name="Stupka E."/>
            <person name="Sugiura K."/>
            <person name="Sultana R."/>
            <person name="Takenaka Y."/>
            <person name="Taki K."/>
            <person name="Tammoja K."/>
            <person name="Tan S.L."/>
            <person name="Tang S."/>
            <person name="Taylor M.S."/>
            <person name="Tegner J."/>
            <person name="Teichmann S.A."/>
            <person name="Ueda H.R."/>
            <person name="van Nimwegen E."/>
            <person name="Verardo R."/>
            <person name="Wei C.L."/>
            <person name="Yagi K."/>
            <person name="Yamanishi H."/>
            <person name="Zabarovsky E."/>
            <person name="Zhu S."/>
            <person name="Zimmer A."/>
            <person name="Hide W."/>
            <person name="Bult C."/>
            <person name="Grimmond S.M."/>
            <person name="Teasdale R.D."/>
            <person name="Liu E.T."/>
            <person name="Brusic V."/>
            <person name="Quackenbush J."/>
            <person name="Wahlestedt C."/>
            <person name="Mattick J.S."/>
            <person name="Hume D.A."/>
            <person name="Kai C."/>
            <person name="Sasaki D."/>
            <person name="Tomaru Y."/>
            <person name="Fukuda S."/>
            <person name="Kanamori-Katayama M."/>
            <person name="Suzuki M."/>
            <person name="Aoki J."/>
            <person name="Arakawa T."/>
            <person name="Iida J."/>
            <person name="Imamura K."/>
            <person name="Itoh M."/>
            <person name="Kato T."/>
            <person name="Kawaji H."/>
            <person name="Kawagashira N."/>
            <person name="Kawashima T."/>
            <person name="Kojima M."/>
            <person name="Kondo S."/>
            <person name="Konno H."/>
            <person name="Nakano K."/>
            <person name="Ninomiya N."/>
            <person name="Nishio T."/>
            <person name="Okada M."/>
            <person name="Plessy C."/>
            <person name="Shibata K."/>
            <person name="Shiraki T."/>
            <person name="Suzuki S."/>
            <person name="Tagami M."/>
            <person name="Waki K."/>
            <person name="Watahiki A."/>
            <person name="Okamura-Oho Y."/>
            <person name="Suzuki H."/>
            <person name="Kawai J."/>
            <person name="Hayashizaki Y."/>
        </authorList>
    </citation>
    <scope>NUCLEOTIDE SEQUENCE [LARGE SCALE MRNA] (ISOFORM 1)</scope>
    <source>
        <strain>C57BL/6J</strain>
        <tissue>Liver</tissue>
    </source>
</reference>
<reference key="3">
    <citation type="journal article" date="2004" name="Genome Res.">
        <title>The status, quality, and expansion of the NIH full-length cDNA project: the Mammalian Gene Collection (MGC).</title>
        <authorList>
            <consortium name="The MGC Project Team"/>
        </authorList>
    </citation>
    <scope>NUCLEOTIDE SEQUENCE [LARGE SCALE MRNA] (ISOFORM 1)</scope>
    <source>
        <strain>FVB/N</strain>
        <tissue>Liver</tissue>
    </source>
</reference>
<reference key="4">
    <citation type="journal article" date="2006" name="J. Proteome Res.">
        <title>Proteome-wide characterization of N-glycosylation events by diagonal chromatography.</title>
        <authorList>
            <person name="Ghesquiere B."/>
            <person name="Van Damme J."/>
            <person name="Martens L."/>
            <person name="Vandekerckhove J."/>
            <person name="Gevaert K."/>
        </authorList>
    </citation>
    <scope>GLYCOSYLATION [LARGE SCALE ANALYSIS] AT ASN-43</scope>
    <source>
        <strain>C57BL/6J</strain>
        <tissue>Plasma</tissue>
    </source>
</reference>
<reference key="5">
    <citation type="journal article" date="2010" name="Cell">
        <title>A tissue-specific atlas of mouse protein phosphorylation and expression.</title>
        <authorList>
            <person name="Huttlin E.L."/>
            <person name="Jedrychowski M.P."/>
            <person name="Elias J.E."/>
            <person name="Goswami T."/>
            <person name="Rad R."/>
            <person name="Beausoleil S.A."/>
            <person name="Villen J."/>
            <person name="Haas W."/>
            <person name="Sowa M.E."/>
            <person name="Gygi S.P."/>
        </authorList>
    </citation>
    <scope>IDENTIFICATION BY MASS SPECTROMETRY [LARGE SCALE ANALYSIS]</scope>
    <source>
        <tissue>Brown adipose tissue</tissue>
        <tissue>Heart</tissue>
        <tissue>Kidney</tissue>
        <tissue>Liver</tissue>
        <tissue>Lung</tissue>
        <tissue>Spleen</tissue>
        <tissue>Testis</tissue>
    </source>
</reference>